<keyword id="KW-1185">Reference proteome</keyword>
<keyword id="KW-0687">Ribonucleoprotein</keyword>
<keyword id="KW-0689">Ribosomal protein</keyword>
<accession>Q1LRC9</accession>
<sequence length="130" mass="14484">MIGNWNYGTGRRKSAVARVFIKSGKGDIIVNGKPIKEYFARETSLMIVRQPLELTAHAETFDIKVNVTGGGETGQAGAVRHGITRALIDYDATLKPTLSKAGYVTRDAREVERKKVGLHKARRRKQFSKR</sequence>
<protein>
    <recommendedName>
        <fullName evidence="1">Small ribosomal subunit protein uS9</fullName>
    </recommendedName>
    <alternativeName>
        <fullName evidence="2">30S ribosomal protein S9</fullName>
    </alternativeName>
</protein>
<dbReference type="EMBL" id="CP000352">
    <property type="protein sequence ID" value="ABF07297.1"/>
    <property type="molecule type" value="Genomic_DNA"/>
</dbReference>
<dbReference type="RefSeq" id="WP_008646004.1">
    <property type="nucleotide sequence ID" value="NC_007973.1"/>
</dbReference>
<dbReference type="SMR" id="Q1LRC9"/>
<dbReference type="STRING" id="266264.Rmet_0411"/>
<dbReference type="GeneID" id="60824013"/>
<dbReference type="KEGG" id="rme:Rmet_0411"/>
<dbReference type="eggNOG" id="COG0103">
    <property type="taxonomic scope" value="Bacteria"/>
</dbReference>
<dbReference type="HOGENOM" id="CLU_046483_2_1_4"/>
<dbReference type="Proteomes" id="UP000002429">
    <property type="component" value="Chromosome"/>
</dbReference>
<dbReference type="GO" id="GO:0022627">
    <property type="term" value="C:cytosolic small ribosomal subunit"/>
    <property type="evidence" value="ECO:0007669"/>
    <property type="project" value="TreeGrafter"/>
</dbReference>
<dbReference type="GO" id="GO:0003723">
    <property type="term" value="F:RNA binding"/>
    <property type="evidence" value="ECO:0007669"/>
    <property type="project" value="TreeGrafter"/>
</dbReference>
<dbReference type="GO" id="GO:0003735">
    <property type="term" value="F:structural constituent of ribosome"/>
    <property type="evidence" value="ECO:0007669"/>
    <property type="project" value="InterPro"/>
</dbReference>
<dbReference type="GO" id="GO:0006412">
    <property type="term" value="P:translation"/>
    <property type="evidence" value="ECO:0007669"/>
    <property type="project" value="UniProtKB-UniRule"/>
</dbReference>
<dbReference type="FunFam" id="3.30.230.10:FF:000001">
    <property type="entry name" value="30S ribosomal protein S9"/>
    <property type="match status" value="1"/>
</dbReference>
<dbReference type="Gene3D" id="3.30.230.10">
    <property type="match status" value="1"/>
</dbReference>
<dbReference type="HAMAP" id="MF_00532_B">
    <property type="entry name" value="Ribosomal_uS9_B"/>
    <property type="match status" value="1"/>
</dbReference>
<dbReference type="InterPro" id="IPR020568">
    <property type="entry name" value="Ribosomal_Su5_D2-typ_SF"/>
</dbReference>
<dbReference type="InterPro" id="IPR000754">
    <property type="entry name" value="Ribosomal_uS9"/>
</dbReference>
<dbReference type="InterPro" id="IPR023035">
    <property type="entry name" value="Ribosomal_uS9_bac/plastid"/>
</dbReference>
<dbReference type="InterPro" id="IPR020574">
    <property type="entry name" value="Ribosomal_uS9_CS"/>
</dbReference>
<dbReference type="InterPro" id="IPR014721">
    <property type="entry name" value="Ribsml_uS5_D2-typ_fold_subgr"/>
</dbReference>
<dbReference type="NCBIfam" id="NF001099">
    <property type="entry name" value="PRK00132.1"/>
    <property type="match status" value="1"/>
</dbReference>
<dbReference type="PANTHER" id="PTHR21569">
    <property type="entry name" value="RIBOSOMAL PROTEIN S9"/>
    <property type="match status" value="1"/>
</dbReference>
<dbReference type="PANTHER" id="PTHR21569:SF1">
    <property type="entry name" value="SMALL RIBOSOMAL SUBUNIT PROTEIN US9M"/>
    <property type="match status" value="1"/>
</dbReference>
<dbReference type="Pfam" id="PF00380">
    <property type="entry name" value="Ribosomal_S9"/>
    <property type="match status" value="1"/>
</dbReference>
<dbReference type="SUPFAM" id="SSF54211">
    <property type="entry name" value="Ribosomal protein S5 domain 2-like"/>
    <property type="match status" value="1"/>
</dbReference>
<dbReference type="PROSITE" id="PS00360">
    <property type="entry name" value="RIBOSOMAL_S9"/>
    <property type="match status" value="1"/>
</dbReference>
<name>RS9_CUPMC</name>
<feature type="chain" id="PRO_1000051302" description="Small ribosomal subunit protein uS9">
    <location>
        <begin position="1"/>
        <end position="130"/>
    </location>
</feature>
<gene>
    <name evidence="1" type="primary">rpsI</name>
    <name type="ordered locus">Rmet_0411</name>
</gene>
<reference key="1">
    <citation type="journal article" date="2010" name="PLoS ONE">
        <title>The complete genome sequence of Cupriavidus metallidurans strain CH34, a master survivalist in harsh and anthropogenic environments.</title>
        <authorList>
            <person name="Janssen P.J."/>
            <person name="Van Houdt R."/>
            <person name="Moors H."/>
            <person name="Monsieurs P."/>
            <person name="Morin N."/>
            <person name="Michaux A."/>
            <person name="Benotmane M.A."/>
            <person name="Leys N."/>
            <person name="Vallaeys T."/>
            <person name="Lapidus A."/>
            <person name="Monchy S."/>
            <person name="Medigue C."/>
            <person name="Taghavi S."/>
            <person name="McCorkle S."/>
            <person name="Dunn J."/>
            <person name="van der Lelie D."/>
            <person name="Mergeay M."/>
        </authorList>
    </citation>
    <scope>NUCLEOTIDE SEQUENCE [LARGE SCALE GENOMIC DNA]</scope>
    <source>
        <strain>ATCC 43123 / DSM 2839 / NBRC 102507 / CH34</strain>
    </source>
</reference>
<organism>
    <name type="scientific">Cupriavidus metallidurans (strain ATCC 43123 / DSM 2839 / NBRC 102507 / CH34)</name>
    <name type="common">Ralstonia metallidurans</name>
    <dbReference type="NCBI Taxonomy" id="266264"/>
    <lineage>
        <taxon>Bacteria</taxon>
        <taxon>Pseudomonadati</taxon>
        <taxon>Pseudomonadota</taxon>
        <taxon>Betaproteobacteria</taxon>
        <taxon>Burkholderiales</taxon>
        <taxon>Burkholderiaceae</taxon>
        <taxon>Cupriavidus</taxon>
    </lineage>
</organism>
<evidence type="ECO:0000255" key="1">
    <source>
        <dbReference type="HAMAP-Rule" id="MF_00532"/>
    </source>
</evidence>
<evidence type="ECO:0000305" key="2"/>
<proteinExistence type="inferred from homology"/>
<comment type="similarity">
    <text evidence="1">Belongs to the universal ribosomal protein uS9 family.</text>
</comment>